<name>RISB_MYCGI</name>
<reference key="1">
    <citation type="submission" date="2007-04" db="EMBL/GenBank/DDBJ databases">
        <title>Complete sequence of chromosome of Mycobacterium gilvum PYR-GCK.</title>
        <authorList>
            <consortium name="US DOE Joint Genome Institute"/>
            <person name="Copeland A."/>
            <person name="Lucas S."/>
            <person name="Lapidus A."/>
            <person name="Barry K."/>
            <person name="Detter J.C."/>
            <person name="Glavina del Rio T."/>
            <person name="Hammon N."/>
            <person name="Israni S."/>
            <person name="Dalin E."/>
            <person name="Tice H."/>
            <person name="Pitluck S."/>
            <person name="Chain P."/>
            <person name="Malfatti S."/>
            <person name="Shin M."/>
            <person name="Vergez L."/>
            <person name="Schmutz J."/>
            <person name="Larimer F."/>
            <person name="Land M."/>
            <person name="Hauser L."/>
            <person name="Kyrpides N."/>
            <person name="Mikhailova N."/>
            <person name="Miller C."/>
            <person name="Richardson P."/>
        </authorList>
    </citation>
    <scope>NUCLEOTIDE SEQUENCE [LARGE SCALE GENOMIC DNA]</scope>
    <source>
        <strain>PYR-GCK</strain>
    </source>
</reference>
<dbReference type="EC" id="2.5.1.78" evidence="1"/>
<dbReference type="EMBL" id="CP000656">
    <property type="protein sequence ID" value="ABP46190.1"/>
    <property type="molecule type" value="Genomic_DNA"/>
</dbReference>
<dbReference type="SMR" id="A4TC12"/>
<dbReference type="STRING" id="350054.Mflv_3718"/>
<dbReference type="KEGG" id="mgi:Mflv_3718"/>
<dbReference type="eggNOG" id="COG0054">
    <property type="taxonomic scope" value="Bacteria"/>
</dbReference>
<dbReference type="HOGENOM" id="CLU_089358_1_2_11"/>
<dbReference type="OrthoDB" id="9809709at2"/>
<dbReference type="UniPathway" id="UPA00275">
    <property type="reaction ID" value="UER00404"/>
</dbReference>
<dbReference type="GO" id="GO:0005829">
    <property type="term" value="C:cytosol"/>
    <property type="evidence" value="ECO:0007669"/>
    <property type="project" value="TreeGrafter"/>
</dbReference>
<dbReference type="GO" id="GO:0009349">
    <property type="term" value="C:riboflavin synthase complex"/>
    <property type="evidence" value="ECO:0007669"/>
    <property type="project" value="InterPro"/>
</dbReference>
<dbReference type="GO" id="GO:0000906">
    <property type="term" value="F:6,7-dimethyl-8-ribityllumazine synthase activity"/>
    <property type="evidence" value="ECO:0007669"/>
    <property type="project" value="UniProtKB-UniRule"/>
</dbReference>
<dbReference type="GO" id="GO:0009231">
    <property type="term" value="P:riboflavin biosynthetic process"/>
    <property type="evidence" value="ECO:0007669"/>
    <property type="project" value="UniProtKB-UniRule"/>
</dbReference>
<dbReference type="CDD" id="cd09209">
    <property type="entry name" value="Lumazine_synthase-I"/>
    <property type="match status" value="1"/>
</dbReference>
<dbReference type="Gene3D" id="3.40.50.960">
    <property type="entry name" value="Lumazine/riboflavin synthase"/>
    <property type="match status" value="1"/>
</dbReference>
<dbReference type="HAMAP" id="MF_00178">
    <property type="entry name" value="Lumazine_synth"/>
    <property type="match status" value="1"/>
</dbReference>
<dbReference type="InterPro" id="IPR034964">
    <property type="entry name" value="LS"/>
</dbReference>
<dbReference type="InterPro" id="IPR002180">
    <property type="entry name" value="LS/RS"/>
</dbReference>
<dbReference type="InterPro" id="IPR036467">
    <property type="entry name" value="LS/RS_sf"/>
</dbReference>
<dbReference type="NCBIfam" id="TIGR00114">
    <property type="entry name" value="lumazine-synth"/>
    <property type="match status" value="1"/>
</dbReference>
<dbReference type="PANTHER" id="PTHR21058:SF0">
    <property type="entry name" value="6,7-DIMETHYL-8-RIBITYLLUMAZINE SYNTHASE"/>
    <property type="match status" value="1"/>
</dbReference>
<dbReference type="PANTHER" id="PTHR21058">
    <property type="entry name" value="6,7-DIMETHYL-8-RIBITYLLUMAZINE SYNTHASE DMRL SYNTHASE LUMAZINE SYNTHASE"/>
    <property type="match status" value="1"/>
</dbReference>
<dbReference type="Pfam" id="PF00885">
    <property type="entry name" value="DMRL_synthase"/>
    <property type="match status" value="1"/>
</dbReference>
<dbReference type="SUPFAM" id="SSF52121">
    <property type="entry name" value="Lumazine synthase"/>
    <property type="match status" value="1"/>
</dbReference>
<comment type="function">
    <text evidence="1">Catalyzes the formation of 6,7-dimethyl-8-ribityllumazine by condensation of 5-amino-6-(D-ribitylamino)uracil with 3,4-dihydroxy-2-butanone 4-phosphate. This is the penultimate step in the biosynthesis of riboflavin.</text>
</comment>
<comment type="catalytic activity">
    <reaction evidence="1">
        <text>(2S)-2-hydroxy-3-oxobutyl phosphate + 5-amino-6-(D-ribitylamino)uracil = 6,7-dimethyl-8-(1-D-ribityl)lumazine + phosphate + 2 H2O + H(+)</text>
        <dbReference type="Rhea" id="RHEA:26152"/>
        <dbReference type="ChEBI" id="CHEBI:15377"/>
        <dbReference type="ChEBI" id="CHEBI:15378"/>
        <dbReference type="ChEBI" id="CHEBI:15934"/>
        <dbReference type="ChEBI" id="CHEBI:43474"/>
        <dbReference type="ChEBI" id="CHEBI:58201"/>
        <dbReference type="ChEBI" id="CHEBI:58830"/>
        <dbReference type="EC" id="2.5.1.78"/>
    </reaction>
</comment>
<comment type="pathway">
    <text evidence="1">Cofactor biosynthesis; riboflavin biosynthesis; riboflavin from 2-hydroxy-3-oxobutyl phosphate and 5-amino-6-(D-ribitylamino)uracil: step 1/2.</text>
</comment>
<comment type="subunit">
    <text evidence="1">Homopentamer.</text>
</comment>
<comment type="similarity">
    <text evidence="1">Belongs to the DMRL synthase family.</text>
</comment>
<feature type="chain" id="PRO_1000098208" description="6,7-dimethyl-8-ribityllumazine synthase">
    <location>
        <begin position="1"/>
        <end position="159"/>
    </location>
</feature>
<feature type="active site" description="Proton donor" evidence="1">
    <location>
        <position position="88"/>
    </location>
</feature>
<feature type="binding site" evidence="1">
    <location>
        <position position="26"/>
    </location>
    <ligand>
        <name>5-amino-6-(D-ribitylamino)uracil</name>
        <dbReference type="ChEBI" id="CHEBI:15934"/>
    </ligand>
</feature>
<feature type="binding site" evidence="1">
    <location>
        <begin position="58"/>
        <end position="60"/>
    </location>
    <ligand>
        <name>5-amino-6-(D-ribitylamino)uracil</name>
        <dbReference type="ChEBI" id="CHEBI:15934"/>
    </ligand>
</feature>
<feature type="binding site" evidence="1">
    <location>
        <begin position="80"/>
        <end position="82"/>
    </location>
    <ligand>
        <name>5-amino-6-(D-ribitylamino)uracil</name>
        <dbReference type="ChEBI" id="CHEBI:15934"/>
    </ligand>
</feature>
<feature type="binding site" evidence="1">
    <location>
        <begin position="85"/>
        <end position="86"/>
    </location>
    <ligand>
        <name>(2S)-2-hydroxy-3-oxobutyl phosphate</name>
        <dbReference type="ChEBI" id="CHEBI:58830"/>
    </ligand>
</feature>
<feature type="binding site" evidence="1">
    <location>
        <position position="113"/>
    </location>
    <ligand>
        <name>5-amino-6-(D-ribitylamino)uracil</name>
        <dbReference type="ChEBI" id="CHEBI:15934"/>
    </ligand>
</feature>
<feature type="binding site" evidence="1">
    <location>
        <position position="127"/>
    </location>
    <ligand>
        <name>(2S)-2-hydroxy-3-oxobutyl phosphate</name>
        <dbReference type="ChEBI" id="CHEBI:58830"/>
    </ligand>
</feature>
<organism>
    <name type="scientific">Mycolicibacterium gilvum (strain PYR-GCK)</name>
    <name type="common">Mycobacterium gilvum (strain PYR-GCK)</name>
    <dbReference type="NCBI Taxonomy" id="350054"/>
    <lineage>
        <taxon>Bacteria</taxon>
        <taxon>Bacillati</taxon>
        <taxon>Actinomycetota</taxon>
        <taxon>Actinomycetes</taxon>
        <taxon>Mycobacteriales</taxon>
        <taxon>Mycobacteriaceae</taxon>
        <taxon>Mycolicibacterium</taxon>
    </lineage>
</organism>
<proteinExistence type="inferred from homology"/>
<accession>A4TC12</accession>
<sequence>MSGAGVPDMPALHAEDVTLAIVASTWHETICDALLDGARKVAEQAGVTDPTVVRVLGAIEIPVVAQALARTHDAVIALGVVIRGETPHFDYVCDAVTQGLTRVSLDASTPVANGVLTVNTENQALDRAGLPNSAEDKGAQAAAAALSTALTLRQLASPS</sequence>
<gene>
    <name evidence="1" type="primary">ribH</name>
    <name type="ordered locus">Mflv_3718</name>
</gene>
<keyword id="KW-0686">Riboflavin biosynthesis</keyword>
<keyword id="KW-0808">Transferase</keyword>
<protein>
    <recommendedName>
        <fullName evidence="1">6,7-dimethyl-8-ribityllumazine synthase</fullName>
        <shortName evidence="1">DMRL synthase</shortName>
        <shortName evidence="1">LS</shortName>
        <shortName evidence="1">Lumazine synthase</shortName>
        <ecNumber evidence="1">2.5.1.78</ecNumber>
    </recommendedName>
</protein>
<evidence type="ECO:0000255" key="1">
    <source>
        <dbReference type="HAMAP-Rule" id="MF_00178"/>
    </source>
</evidence>